<name>AROE_BORA1</name>
<gene>
    <name evidence="1" type="primary">aroE</name>
    <name type="ordered locus">BAV3004</name>
</gene>
<evidence type="ECO:0000255" key="1">
    <source>
        <dbReference type="HAMAP-Rule" id="MF_00222"/>
    </source>
</evidence>
<dbReference type="EC" id="1.1.1.25" evidence="1"/>
<dbReference type="EMBL" id="AM167904">
    <property type="protein sequence ID" value="CAJ50614.1"/>
    <property type="molecule type" value="Genomic_DNA"/>
</dbReference>
<dbReference type="RefSeq" id="WP_012418643.1">
    <property type="nucleotide sequence ID" value="NC_010645.1"/>
</dbReference>
<dbReference type="SMR" id="Q2KUU3"/>
<dbReference type="STRING" id="360910.BAV3004"/>
<dbReference type="GeneID" id="92933739"/>
<dbReference type="KEGG" id="bav:BAV3004"/>
<dbReference type="eggNOG" id="COG0169">
    <property type="taxonomic scope" value="Bacteria"/>
</dbReference>
<dbReference type="HOGENOM" id="CLU_044063_2_1_4"/>
<dbReference type="OrthoDB" id="9776868at2"/>
<dbReference type="UniPathway" id="UPA00053">
    <property type="reaction ID" value="UER00087"/>
</dbReference>
<dbReference type="Proteomes" id="UP000001977">
    <property type="component" value="Chromosome"/>
</dbReference>
<dbReference type="GO" id="GO:0005829">
    <property type="term" value="C:cytosol"/>
    <property type="evidence" value="ECO:0007669"/>
    <property type="project" value="TreeGrafter"/>
</dbReference>
<dbReference type="GO" id="GO:0050661">
    <property type="term" value="F:NADP binding"/>
    <property type="evidence" value="ECO:0007669"/>
    <property type="project" value="InterPro"/>
</dbReference>
<dbReference type="GO" id="GO:0004764">
    <property type="term" value="F:shikimate 3-dehydrogenase (NADP+) activity"/>
    <property type="evidence" value="ECO:0007669"/>
    <property type="project" value="UniProtKB-UniRule"/>
</dbReference>
<dbReference type="GO" id="GO:0008652">
    <property type="term" value="P:amino acid biosynthetic process"/>
    <property type="evidence" value="ECO:0007669"/>
    <property type="project" value="UniProtKB-KW"/>
</dbReference>
<dbReference type="GO" id="GO:0009073">
    <property type="term" value="P:aromatic amino acid family biosynthetic process"/>
    <property type="evidence" value="ECO:0007669"/>
    <property type="project" value="UniProtKB-KW"/>
</dbReference>
<dbReference type="GO" id="GO:0009423">
    <property type="term" value="P:chorismate biosynthetic process"/>
    <property type="evidence" value="ECO:0007669"/>
    <property type="project" value="UniProtKB-UniRule"/>
</dbReference>
<dbReference type="GO" id="GO:0019632">
    <property type="term" value="P:shikimate metabolic process"/>
    <property type="evidence" value="ECO:0007669"/>
    <property type="project" value="InterPro"/>
</dbReference>
<dbReference type="CDD" id="cd01065">
    <property type="entry name" value="NAD_bind_Shikimate_DH"/>
    <property type="match status" value="1"/>
</dbReference>
<dbReference type="FunFam" id="3.40.50.10860:FF:000006">
    <property type="entry name" value="Shikimate dehydrogenase (NADP(+))"/>
    <property type="match status" value="1"/>
</dbReference>
<dbReference type="Gene3D" id="3.40.50.10860">
    <property type="entry name" value="Leucine Dehydrogenase, chain A, domain 1"/>
    <property type="match status" value="1"/>
</dbReference>
<dbReference type="Gene3D" id="3.40.50.720">
    <property type="entry name" value="NAD(P)-binding Rossmann-like Domain"/>
    <property type="match status" value="1"/>
</dbReference>
<dbReference type="HAMAP" id="MF_00222">
    <property type="entry name" value="Shikimate_DH_AroE"/>
    <property type="match status" value="1"/>
</dbReference>
<dbReference type="InterPro" id="IPR046346">
    <property type="entry name" value="Aminoacid_DH-like_N_sf"/>
</dbReference>
<dbReference type="InterPro" id="IPR036291">
    <property type="entry name" value="NAD(P)-bd_dom_sf"/>
</dbReference>
<dbReference type="InterPro" id="IPR041121">
    <property type="entry name" value="SDH_C"/>
</dbReference>
<dbReference type="InterPro" id="IPR011342">
    <property type="entry name" value="Shikimate_DH"/>
</dbReference>
<dbReference type="InterPro" id="IPR013708">
    <property type="entry name" value="Shikimate_DH-bd_N"/>
</dbReference>
<dbReference type="InterPro" id="IPR022893">
    <property type="entry name" value="Shikimate_DH_fam"/>
</dbReference>
<dbReference type="InterPro" id="IPR006151">
    <property type="entry name" value="Shikm_DH/Glu-tRNA_Rdtase"/>
</dbReference>
<dbReference type="NCBIfam" id="TIGR00507">
    <property type="entry name" value="aroE"/>
    <property type="match status" value="1"/>
</dbReference>
<dbReference type="NCBIfam" id="NF001310">
    <property type="entry name" value="PRK00258.1-2"/>
    <property type="match status" value="1"/>
</dbReference>
<dbReference type="PANTHER" id="PTHR21089:SF1">
    <property type="entry name" value="BIFUNCTIONAL 3-DEHYDROQUINATE DEHYDRATASE_SHIKIMATE DEHYDROGENASE, CHLOROPLASTIC"/>
    <property type="match status" value="1"/>
</dbReference>
<dbReference type="PANTHER" id="PTHR21089">
    <property type="entry name" value="SHIKIMATE DEHYDROGENASE"/>
    <property type="match status" value="1"/>
</dbReference>
<dbReference type="Pfam" id="PF18317">
    <property type="entry name" value="SDH_C"/>
    <property type="match status" value="1"/>
</dbReference>
<dbReference type="Pfam" id="PF01488">
    <property type="entry name" value="Shikimate_DH"/>
    <property type="match status" value="1"/>
</dbReference>
<dbReference type="Pfam" id="PF08501">
    <property type="entry name" value="Shikimate_dh_N"/>
    <property type="match status" value="1"/>
</dbReference>
<dbReference type="SUPFAM" id="SSF53223">
    <property type="entry name" value="Aminoacid dehydrogenase-like, N-terminal domain"/>
    <property type="match status" value="1"/>
</dbReference>
<dbReference type="SUPFAM" id="SSF51735">
    <property type="entry name" value="NAD(P)-binding Rossmann-fold domains"/>
    <property type="match status" value="1"/>
</dbReference>
<proteinExistence type="inferred from homology"/>
<sequence>MTSRPALRRYAVIGNPITHSRSPQIHAMFAAQTGISLEYERIPAPLDGFRATAEAFFLAGGQGLNVTVPFKQEAFELAREHLSARARMAGAVNTLTWRDGVLQGCNTDGVGLVNDLIRLGVMLQGARLLLVGAGGAARGVLQPLAEAGCAEIRIVNRSPGRAAELLAAWTASGIPGGVQTSAGALDEAGGAWDIVINATASSLHDLAPALPGGLYAPGALAYDMVYGARPTPFMRQARADGAALTADGLGMLVGQAAESFFIWHGLRPDPTAVLTTLRANLLAED</sequence>
<organism>
    <name type="scientific">Bordetella avium (strain 197N)</name>
    <dbReference type="NCBI Taxonomy" id="360910"/>
    <lineage>
        <taxon>Bacteria</taxon>
        <taxon>Pseudomonadati</taxon>
        <taxon>Pseudomonadota</taxon>
        <taxon>Betaproteobacteria</taxon>
        <taxon>Burkholderiales</taxon>
        <taxon>Alcaligenaceae</taxon>
        <taxon>Bordetella</taxon>
    </lineage>
</organism>
<comment type="function">
    <text evidence="1">Involved in the biosynthesis of the chorismate, which leads to the biosynthesis of aromatic amino acids. Catalyzes the reversible NADPH linked reduction of 3-dehydroshikimate (DHSA) to yield shikimate (SA).</text>
</comment>
<comment type="catalytic activity">
    <reaction evidence="1">
        <text>shikimate + NADP(+) = 3-dehydroshikimate + NADPH + H(+)</text>
        <dbReference type="Rhea" id="RHEA:17737"/>
        <dbReference type="ChEBI" id="CHEBI:15378"/>
        <dbReference type="ChEBI" id="CHEBI:16630"/>
        <dbReference type="ChEBI" id="CHEBI:36208"/>
        <dbReference type="ChEBI" id="CHEBI:57783"/>
        <dbReference type="ChEBI" id="CHEBI:58349"/>
        <dbReference type="EC" id="1.1.1.25"/>
    </reaction>
</comment>
<comment type="pathway">
    <text evidence="1">Metabolic intermediate biosynthesis; chorismate biosynthesis; chorismate from D-erythrose 4-phosphate and phosphoenolpyruvate: step 4/7.</text>
</comment>
<comment type="subunit">
    <text evidence="1">Homodimer.</text>
</comment>
<comment type="similarity">
    <text evidence="1">Belongs to the shikimate dehydrogenase family.</text>
</comment>
<reference key="1">
    <citation type="journal article" date="2006" name="J. Bacteriol.">
        <title>Comparison of the genome sequence of the poultry pathogen Bordetella avium with those of B. bronchiseptica, B. pertussis, and B. parapertussis reveals extensive diversity in surface structures associated with host interaction.</title>
        <authorList>
            <person name="Sebaihia M."/>
            <person name="Preston A."/>
            <person name="Maskell D.J."/>
            <person name="Kuzmiak H."/>
            <person name="Connell T.D."/>
            <person name="King N.D."/>
            <person name="Orndorff P.E."/>
            <person name="Miyamoto D.M."/>
            <person name="Thomson N.R."/>
            <person name="Harris D."/>
            <person name="Goble A."/>
            <person name="Lord A."/>
            <person name="Murphy L."/>
            <person name="Quail M.A."/>
            <person name="Rutter S."/>
            <person name="Squares R."/>
            <person name="Squares S."/>
            <person name="Woodward J."/>
            <person name="Parkhill J."/>
            <person name="Temple L.M."/>
        </authorList>
    </citation>
    <scope>NUCLEOTIDE SEQUENCE [LARGE SCALE GENOMIC DNA]</scope>
    <source>
        <strain>197N</strain>
    </source>
</reference>
<protein>
    <recommendedName>
        <fullName evidence="1">Shikimate dehydrogenase (NADP(+))</fullName>
        <shortName evidence="1">SDH</shortName>
        <ecNumber evidence="1">1.1.1.25</ecNumber>
    </recommendedName>
</protein>
<feature type="chain" id="PRO_0000325105" description="Shikimate dehydrogenase (NADP(+))">
    <location>
        <begin position="1"/>
        <end position="285"/>
    </location>
</feature>
<feature type="active site" description="Proton acceptor" evidence="1">
    <location>
        <position position="71"/>
    </location>
</feature>
<feature type="binding site" evidence="1">
    <location>
        <begin position="20"/>
        <end position="22"/>
    </location>
    <ligand>
        <name>shikimate</name>
        <dbReference type="ChEBI" id="CHEBI:36208"/>
    </ligand>
</feature>
<feature type="binding site" evidence="1">
    <location>
        <position position="67"/>
    </location>
    <ligand>
        <name>shikimate</name>
        <dbReference type="ChEBI" id="CHEBI:36208"/>
    </ligand>
</feature>
<feature type="binding site" evidence="1">
    <location>
        <position position="93"/>
    </location>
    <ligand>
        <name>shikimate</name>
        <dbReference type="ChEBI" id="CHEBI:36208"/>
    </ligand>
</feature>
<feature type="binding site" evidence="1">
    <location>
        <position position="108"/>
    </location>
    <ligand>
        <name>shikimate</name>
        <dbReference type="ChEBI" id="CHEBI:36208"/>
    </ligand>
</feature>
<feature type="binding site" evidence="1">
    <location>
        <begin position="132"/>
        <end position="136"/>
    </location>
    <ligand>
        <name>NADP(+)</name>
        <dbReference type="ChEBI" id="CHEBI:58349"/>
    </ligand>
</feature>
<feature type="binding site" evidence="1">
    <location>
        <position position="224"/>
    </location>
    <ligand>
        <name>NADP(+)</name>
        <dbReference type="ChEBI" id="CHEBI:58349"/>
    </ligand>
</feature>
<feature type="binding site" evidence="1">
    <location>
        <position position="226"/>
    </location>
    <ligand>
        <name>shikimate</name>
        <dbReference type="ChEBI" id="CHEBI:36208"/>
    </ligand>
</feature>
<feature type="binding site" evidence="1">
    <location>
        <position position="248"/>
    </location>
    <ligand>
        <name>NADP(+)</name>
        <dbReference type="ChEBI" id="CHEBI:58349"/>
    </ligand>
</feature>
<accession>Q2KUU3</accession>
<keyword id="KW-0028">Amino-acid biosynthesis</keyword>
<keyword id="KW-0057">Aromatic amino acid biosynthesis</keyword>
<keyword id="KW-0521">NADP</keyword>
<keyword id="KW-0560">Oxidoreductase</keyword>
<keyword id="KW-1185">Reference proteome</keyword>